<reference key="1">
    <citation type="journal article" date="2005" name="Nature">
        <title>The map-based sequence of the rice genome.</title>
        <authorList>
            <consortium name="International rice genome sequencing project (IRGSP)"/>
        </authorList>
    </citation>
    <scope>NUCLEOTIDE SEQUENCE [LARGE SCALE GENOMIC DNA]</scope>
    <source>
        <strain>cv. Nipponbare</strain>
    </source>
</reference>
<reference key="2">
    <citation type="journal article" date="2008" name="Nucleic Acids Res.">
        <title>The rice annotation project database (RAP-DB): 2008 update.</title>
        <authorList>
            <consortium name="The rice annotation project (RAP)"/>
        </authorList>
    </citation>
    <scope>GENOME REANNOTATION</scope>
    <source>
        <strain>cv. Nipponbare</strain>
    </source>
</reference>
<reference key="3">
    <citation type="journal article" date="2013" name="Rice">
        <title>Improvement of the Oryza sativa Nipponbare reference genome using next generation sequence and optical map data.</title>
        <authorList>
            <person name="Kawahara Y."/>
            <person name="de la Bastide M."/>
            <person name="Hamilton J.P."/>
            <person name="Kanamori H."/>
            <person name="McCombie W.R."/>
            <person name="Ouyang S."/>
            <person name="Schwartz D.C."/>
            <person name="Tanaka T."/>
            <person name="Wu J."/>
            <person name="Zhou S."/>
            <person name="Childs K.L."/>
            <person name="Davidson R.M."/>
            <person name="Lin H."/>
            <person name="Quesada-Ocampo L."/>
            <person name="Vaillancourt B."/>
            <person name="Sakai H."/>
            <person name="Lee S.S."/>
            <person name="Kim J."/>
            <person name="Numa H."/>
            <person name="Itoh T."/>
            <person name="Buell C.R."/>
            <person name="Matsumoto T."/>
        </authorList>
    </citation>
    <scope>GENOME REANNOTATION</scope>
    <source>
        <strain>cv. Nipponbare</strain>
    </source>
</reference>
<reference key="4">
    <citation type="journal article" date="2003" name="Science">
        <title>Collection, mapping, and annotation of over 28,000 cDNA clones from japonica rice.</title>
        <authorList>
            <consortium name="The rice full-length cDNA consortium"/>
        </authorList>
    </citation>
    <scope>NUCLEOTIDE SEQUENCE [LARGE SCALE MRNA]</scope>
    <source>
        <strain>cv. Nipponbare</strain>
    </source>
</reference>
<organism>
    <name type="scientific">Oryza sativa subsp. japonica</name>
    <name type="common">Rice</name>
    <dbReference type="NCBI Taxonomy" id="39947"/>
    <lineage>
        <taxon>Eukaryota</taxon>
        <taxon>Viridiplantae</taxon>
        <taxon>Streptophyta</taxon>
        <taxon>Embryophyta</taxon>
        <taxon>Tracheophyta</taxon>
        <taxon>Spermatophyta</taxon>
        <taxon>Magnoliopsida</taxon>
        <taxon>Liliopsida</taxon>
        <taxon>Poales</taxon>
        <taxon>Poaceae</taxon>
        <taxon>BOP clade</taxon>
        <taxon>Oryzoideae</taxon>
        <taxon>Oryzeae</taxon>
        <taxon>Oryzinae</taxon>
        <taxon>Oryza</taxon>
        <taxon>Oryza sativa</taxon>
    </lineage>
</organism>
<name>LOL1_ORYSJ</name>
<proteinExistence type="evidence at transcript level"/>
<comment type="function">
    <text evidence="1">Putative zinc finger that may be involved in programmed cell death and defense response.</text>
</comment>
<comment type="subcellular location">
    <subcellularLocation>
        <location evidence="3">Nucleus</location>
    </subcellularLocation>
</comment>
<gene>
    <name type="primary">LOL1</name>
    <name type="ordered locus">Os07g0472200</name>
    <name type="ORF">P0675B10.121</name>
</gene>
<accession>Q69UP7</accession>
<accession>A0A0P0X5I2</accession>
<feature type="chain" id="PRO_0000408487" description="Protein LOL1">
    <location>
        <begin position="1"/>
        <end position="147"/>
    </location>
</feature>
<feature type="region of interest" description="Disordered" evidence="2">
    <location>
        <begin position="1"/>
        <end position="38"/>
    </location>
</feature>
<feature type="region of interest" description="Putative zinc finger">
    <location>
        <begin position="47"/>
        <end position="77"/>
    </location>
</feature>
<feature type="compositionally biased region" description="Polar residues" evidence="2">
    <location>
        <begin position="22"/>
        <end position="38"/>
    </location>
</feature>
<evidence type="ECO:0000250" key="1"/>
<evidence type="ECO:0000256" key="2">
    <source>
        <dbReference type="SAM" id="MobiDB-lite"/>
    </source>
</evidence>
<evidence type="ECO:0000305" key="3"/>
<protein>
    <recommendedName>
        <fullName>Protein LOL1</fullName>
    </recommendedName>
    <alternativeName>
        <fullName>Protein LSD ONE LIKE 1</fullName>
        <shortName>OsLOL1</shortName>
    </alternativeName>
    <alternativeName>
        <fullName>Putative zinc finger LOL1</fullName>
    </alternativeName>
</protein>
<sequence>MVASRAPRSESPWLKKPMHGVSGSTAMASTPWSSMPPSSHSLGAQSQLVCSGCRNLLMYPAGATSICCAVCGTVTAVPAPEQKSSCNVHENKERLKGNTNGFRAPQRCARRVDGACTQVAREVHTEVALVIFTLLCVTLPGLLFSLG</sequence>
<keyword id="KW-0539">Nucleus</keyword>
<keyword id="KW-1185">Reference proteome</keyword>
<dbReference type="EMBL" id="AP004347">
    <property type="protein sequence ID" value="BAD30674.1"/>
    <property type="molecule type" value="Genomic_DNA"/>
</dbReference>
<dbReference type="EMBL" id="AP008213">
    <property type="protein sequence ID" value="BAF21525.1"/>
    <property type="molecule type" value="Genomic_DNA"/>
</dbReference>
<dbReference type="EMBL" id="AP014963">
    <property type="protein sequence ID" value="BAT01432.1"/>
    <property type="molecule type" value="Genomic_DNA"/>
</dbReference>
<dbReference type="EMBL" id="AK061509">
    <property type="protein sequence ID" value="BAG87973.1"/>
    <property type="molecule type" value="mRNA"/>
</dbReference>
<dbReference type="RefSeq" id="XP_015644598.1">
    <property type="nucleotide sequence ID" value="XM_015789112.1"/>
</dbReference>
<dbReference type="STRING" id="39947.Q69UP7"/>
<dbReference type="PaxDb" id="39947-Q69UP7"/>
<dbReference type="EnsemblPlants" id="Os07t0472200-01">
    <property type="protein sequence ID" value="Os07t0472200-01"/>
    <property type="gene ID" value="Os07g0472200"/>
</dbReference>
<dbReference type="Gramene" id="Os07t0472200-01">
    <property type="protein sequence ID" value="Os07t0472200-01"/>
    <property type="gene ID" value="Os07g0472200"/>
</dbReference>
<dbReference type="KEGG" id="dosa:Os07g0472200"/>
<dbReference type="HOGENOM" id="CLU_148319_0_0_1"/>
<dbReference type="InParanoid" id="Q69UP7"/>
<dbReference type="OrthoDB" id="638133at2759"/>
<dbReference type="Proteomes" id="UP000000763">
    <property type="component" value="Chromosome 7"/>
</dbReference>
<dbReference type="Proteomes" id="UP000059680">
    <property type="component" value="Chromosome 7"/>
</dbReference>
<dbReference type="GO" id="GO:0005634">
    <property type="term" value="C:nucleus"/>
    <property type="evidence" value="ECO:0007669"/>
    <property type="project" value="UniProtKB-SubCell"/>
</dbReference>
<dbReference type="InterPro" id="IPR040319">
    <property type="entry name" value="LSD1-like"/>
</dbReference>
<dbReference type="InterPro" id="IPR005735">
    <property type="entry name" value="Znf_LSD1"/>
</dbReference>
<dbReference type="NCBIfam" id="TIGR01053">
    <property type="entry name" value="LSD1"/>
    <property type="match status" value="1"/>
</dbReference>
<dbReference type="PANTHER" id="PTHR31747">
    <property type="entry name" value="PROTEIN LSD1"/>
    <property type="match status" value="1"/>
</dbReference>
<dbReference type="PANTHER" id="PTHR31747:SF3">
    <property type="entry name" value="PROTEIN LSD1"/>
    <property type="match status" value="1"/>
</dbReference>
<dbReference type="Pfam" id="PF06943">
    <property type="entry name" value="zf-LSD1"/>
    <property type="match status" value="1"/>
</dbReference>